<geneLocation type="chloroplast"/>
<organism>
    <name type="scientific">Chlorella vulgaris</name>
    <name type="common">Green alga</name>
    <dbReference type="NCBI Taxonomy" id="3077"/>
    <lineage>
        <taxon>Eukaryota</taxon>
        <taxon>Viridiplantae</taxon>
        <taxon>Chlorophyta</taxon>
        <taxon>core chlorophytes</taxon>
        <taxon>Trebouxiophyceae</taxon>
        <taxon>Chlorellales</taxon>
        <taxon>Chlorellaceae</taxon>
        <taxon>Chlorella clade</taxon>
        <taxon>Chlorella</taxon>
    </lineage>
</organism>
<accession>O20133</accession>
<keyword id="KW-0150">Chloroplast</keyword>
<keyword id="KW-0934">Plastid</keyword>
<proteinExistence type="predicted"/>
<protein>
    <recommendedName>
        <fullName>Uncharacterized 27.2 kDa protein in rrn23-psbC intergenic region</fullName>
    </recommendedName>
    <alternativeName>
        <fullName>ORF236</fullName>
    </alternativeName>
</protein>
<comment type="subcellular location">
    <subcellularLocation>
        <location>Plastid</location>
        <location>Chloroplast</location>
    </subcellularLocation>
</comment>
<sequence length="236" mass="27197">MRAKSIAYVWSTATQSLTPEQCEAMIKLREPLNVVFDQGMRNVQLILKKQDHFDELMTTYETCQTAEKNFHETTFLPAKANLDTFVGSQKARKEAANHFKKIKSQSIEYTKEANQAFTAAMKYDQNHIVPAKNALQKIETCIINEVEDKLEEILNPSSITEKTLKGKTQRQKTNAALINRIKRRNTAFNNHDNNIINSFHGPSSFEQISIYYNLPIDRSFQKMVQKQLEKIKVLPN</sequence>
<dbReference type="EMBL" id="AB001684">
    <property type="protein sequence ID" value="BAA57873.1"/>
    <property type="molecule type" value="Genomic_DNA"/>
</dbReference>
<dbReference type="PIR" id="T07226">
    <property type="entry name" value="T07226"/>
</dbReference>
<dbReference type="RefSeq" id="NP_045798.1">
    <property type="nucleotide sequence ID" value="NC_001865.1"/>
</dbReference>
<dbReference type="SMR" id="O20133"/>
<dbReference type="GeneID" id="1457412"/>
<dbReference type="GO" id="GO:0009507">
    <property type="term" value="C:chloroplast"/>
    <property type="evidence" value="ECO:0007669"/>
    <property type="project" value="UniProtKB-SubCell"/>
</dbReference>
<reference key="1">
    <citation type="journal article" date="1997" name="Proc. Natl. Acad. Sci. U.S.A.">
        <title>Complete nucleotide sequence of the chloroplast genome from the green alga Chlorella vulgaris: the existence of genes possibly involved in chloroplast division.</title>
        <authorList>
            <person name="Wakasugi T."/>
            <person name="Nagai T."/>
            <person name="Kapoor M."/>
            <person name="Sugita M."/>
            <person name="Ito M."/>
            <person name="Ito S."/>
            <person name="Tsudzuki J."/>
            <person name="Nakashima K."/>
            <person name="Tsudzuki T."/>
            <person name="Suzuki Y."/>
            <person name="Hamada A."/>
            <person name="Ohta T."/>
            <person name="Inamura A."/>
            <person name="Yoshinaga K."/>
            <person name="Sugiura M."/>
        </authorList>
    </citation>
    <scope>NUCLEOTIDE SEQUENCE [LARGE SCALE GENOMIC DNA]</scope>
    <source>
        <strain>IAM C-27 / Tamiya</strain>
    </source>
</reference>
<name>YCX4_CHLVU</name>
<feature type="chain" id="PRO_0000217512" description="Uncharacterized 27.2 kDa protein in rrn23-psbC intergenic region">
    <location>
        <begin position="1"/>
        <end position="236"/>
    </location>
</feature>